<comment type="function">
    <text evidence="1">Part of the ABC transporter complex NikABCDE (Opp2) involved in nickel import. Probably responsible for the translocation of the substrate across the membrane.</text>
</comment>
<comment type="subunit">
    <text evidence="1">The complex is composed of two ATP-binding proteins (NikD and NikE), two transmembrane proteins (NikB and NikC) and a solute-binding protein (NikA).</text>
</comment>
<comment type="subcellular location">
    <subcellularLocation>
        <location evidence="3">Cell membrane</location>
        <topology evidence="2">Multi-pass membrane protein</topology>
    </subcellularLocation>
</comment>
<comment type="similarity">
    <text evidence="3">Belongs to the binding-protein-dependent transport system permease family. OppBC subfamily.</text>
</comment>
<proteinExistence type="inferred from homology"/>
<name>NIKC_STAA3</name>
<protein>
    <recommendedName>
        <fullName evidence="1">Nickel import system permease protein NikC</fullName>
    </recommendedName>
</protein>
<accession>Q2FH56</accession>
<dbReference type="EMBL" id="CP000255">
    <property type="protein sequence ID" value="ABD22546.1"/>
    <property type="molecule type" value="Genomic_DNA"/>
</dbReference>
<dbReference type="RefSeq" id="WP_000548932.1">
    <property type="nucleotide sequence ID" value="NZ_CP027476.1"/>
</dbReference>
<dbReference type="SMR" id="Q2FH56"/>
<dbReference type="KEGG" id="saa:SAUSA300_1275"/>
<dbReference type="HOGENOM" id="CLU_028518_5_3_9"/>
<dbReference type="OMA" id="MFGLWCL"/>
<dbReference type="Proteomes" id="UP000001939">
    <property type="component" value="Chromosome"/>
</dbReference>
<dbReference type="GO" id="GO:0005886">
    <property type="term" value="C:plasma membrane"/>
    <property type="evidence" value="ECO:0007669"/>
    <property type="project" value="UniProtKB-SubCell"/>
</dbReference>
<dbReference type="GO" id="GO:0015675">
    <property type="term" value="P:nickel cation transport"/>
    <property type="evidence" value="ECO:0007669"/>
    <property type="project" value="UniProtKB-KW"/>
</dbReference>
<dbReference type="GO" id="GO:0055085">
    <property type="term" value="P:transmembrane transport"/>
    <property type="evidence" value="ECO:0007669"/>
    <property type="project" value="InterPro"/>
</dbReference>
<dbReference type="CDD" id="cd06261">
    <property type="entry name" value="TM_PBP2"/>
    <property type="match status" value="1"/>
</dbReference>
<dbReference type="Gene3D" id="1.10.3720.10">
    <property type="entry name" value="MetI-like"/>
    <property type="match status" value="1"/>
</dbReference>
<dbReference type="InterPro" id="IPR053385">
    <property type="entry name" value="ABC_transport_permease"/>
</dbReference>
<dbReference type="InterPro" id="IPR050366">
    <property type="entry name" value="BP-dependent_transpt_permease"/>
</dbReference>
<dbReference type="InterPro" id="IPR000515">
    <property type="entry name" value="MetI-like"/>
</dbReference>
<dbReference type="InterPro" id="IPR035906">
    <property type="entry name" value="MetI-like_sf"/>
</dbReference>
<dbReference type="NCBIfam" id="NF045474">
    <property type="entry name" value="Opp2C"/>
    <property type="match status" value="1"/>
</dbReference>
<dbReference type="PANTHER" id="PTHR43386:SF1">
    <property type="entry name" value="D,D-DIPEPTIDE TRANSPORT SYSTEM PERMEASE PROTEIN DDPC-RELATED"/>
    <property type="match status" value="1"/>
</dbReference>
<dbReference type="PANTHER" id="PTHR43386">
    <property type="entry name" value="OLIGOPEPTIDE TRANSPORT SYSTEM PERMEASE PROTEIN APPC"/>
    <property type="match status" value="1"/>
</dbReference>
<dbReference type="Pfam" id="PF00528">
    <property type="entry name" value="BPD_transp_1"/>
    <property type="match status" value="1"/>
</dbReference>
<dbReference type="SUPFAM" id="SSF161098">
    <property type="entry name" value="MetI-like"/>
    <property type="match status" value="1"/>
</dbReference>
<dbReference type="PROSITE" id="PS50928">
    <property type="entry name" value="ABC_TM1"/>
    <property type="match status" value="1"/>
</dbReference>
<organism>
    <name type="scientific">Staphylococcus aureus (strain USA300)</name>
    <dbReference type="NCBI Taxonomy" id="367830"/>
    <lineage>
        <taxon>Bacteria</taxon>
        <taxon>Bacillati</taxon>
        <taxon>Bacillota</taxon>
        <taxon>Bacilli</taxon>
        <taxon>Bacillales</taxon>
        <taxon>Staphylococcaceae</taxon>
        <taxon>Staphylococcus</taxon>
    </lineage>
</organism>
<sequence length="276" mass="31255">MHKIFSKNNLIFFVFVAFIFVVIVLQFFVSSENATKVNLSQTFEPISWLHLLGTDDYGRDLFTRIIIGARSTLFVTVLTLIAIVVIGVTLGLFAGYKKGWIERLVLRFIDVGLSIPEFIIMIALASFFQPSLWNLVISITLIKWMNYTRLTRSIVNSEMNKPYIKMAQLFHVPTRTILIRHLTPKIIPAIIVLMVVDFGKIILYISSLSFIGLGAQPPTPEWGAMLQQGRDFISSHPIMLIAPASVIAITILIFNLTGDALRDRLLKQRGEYDESH</sequence>
<reference key="1">
    <citation type="journal article" date="2006" name="Lancet">
        <title>Complete genome sequence of USA300, an epidemic clone of community-acquired meticillin-resistant Staphylococcus aureus.</title>
        <authorList>
            <person name="Diep B.A."/>
            <person name="Gill S.R."/>
            <person name="Chang R.F."/>
            <person name="Phan T.H."/>
            <person name="Chen J.H."/>
            <person name="Davidson M.G."/>
            <person name="Lin F."/>
            <person name="Lin J."/>
            <person name="Carleton H.A."/>
            <person name="Mongodin E.F."/>
            <person name="Sensabaugh G.F."/>
            <person name="Perdreau-Remington F."/>
        </authorList>
    </citation>
    <scope>NUCLEOTIDE SEQUENCE [LARGE SCALE GENOMIC DNA]</scope>
    <source>
        <strain>USA300</strain>
    </source>
</reference>
<gene>
    <name evidence="1" type="primary">nikC</name>
    <name type="synonym">oppC2</name>
    <name type="ordered locus">SAUSA300_1275</name>
</gene>
<keyword id="KW-1003">Cell membrane</keyword>
<keyword id="KW-0406">Ion transport</keyword>
<keyword id="KW-0472">Membrane</keyword>
<keyword id="KW-0533">Nickel</keyword>
<keyword id="KW-0921">Nickel transport</keyword>
<keyword id="KW-0812">Transmembrane</keyword>
<keyword id="KW-1133">Transmembrane helix</keyword>
<keyword id="KW-0813">Transport</keyword>
<evidence type="ECO:0000250" key="1">
    <source>
        <dbReference type="UniProtKB" id="Q2FYQ6"/>
    </source>
</evidence>
<evidence type="ECO:0000255" key="2">
    <source>
        <dbReference type="PROSITE-ProRule" id="PRU00441"/>
    </source>
</evidence>
<evidence type="ECO:0000305" key="3"/>
<feature type="chain" id="PRO_0000276790" description="Nickel import system permease protein NikC">
    <location>
        <begin position="1"/>
        <end position="276"/>
    </location>
</feature>
<feature type="transmembrane region" description="Helical" evidence="2">
    <location>
        <begin position="10"/>
        <end position="30"/>
    </location>
</feature>
<feature type="transmembrane region" description="Helical" evidence="2">
    <location>
        <begin position="73"/>
        <end position="93"/>
    </location>
</feature>
<feature type="transmembrane region" description="Helical" evidence="2">
    <location>
        <begin position="108"/>
        <end position="128"/>
    </location>
</feature>
<feature type="transmembrane region" description="Helical" evidence="2">
    <location>
        <begin position="186"/>
        <end position="206"/>
    </location>
</feature>
<feature type="transmembrane region" description="Helical" evidence="2">
    <location>
        <begin position="238"/>
        <end position="258"/>
    </location>
</feature>
<feature type="domain" description="ABC transmembrane type-1" evidence="2">
    <location>
        <begin position="69"/>
        <end position="258"/>
    </location>
</feature>